<sequence>MSDTSENSNAEIPADTSDVKDKPKPIVRAPQFPPPPEGISKSQWKKICRKKRFEETRAEYAQIRKEKRNRAKLARREKLKEYTDRGEEIPEELKRPPKVNLNQSDSGISIILDCSFDDLMNDREIVSLSTQVTRAYSSNKRENNYAKIKVTSFDKRLKQRFDNDLSNSNYTKWKNFEFTADPTLPTENAVYLTADTEEKLDTLEPGTTYIVGGIVDKNRHKNLCYNKAKELNIPTKRLPIGEFINLAGRKVLTTSHMVQLMLRYFDNKDWKEAFESVLPPRKLEVDSTKEDSETASAE</sequence>
<comment type="function">
    <text evidence="2">S-adenosyl-L-methionine-dependent guanine N(1)-methyltransferase that catalyzes the formation of N(1)-methylguanine at position 9 (m1G9) in cytoplasmic tRNA.</text>
</comment>
<comment type="catalytic activity">
    <reaction evidence="2">
        <text>guanosine(9) in tRNA + S-adenosyl-L-methionine = N(1)-methylguanosine(9) in tRNA + S-adenosyl-L-homocysteine + H(+)</text>
        <dbReference type="Rhea" id="RHEA:43156"/>
        <dbReference type="Rhea" id="RHEA-COMP:10367"/>
        <dbReference type="Rhea" id="RHEA-COMP:10368"/>
        <dbReference type="ChEBI" id="CHEBI:15378"/>
        <dbReference type="ChEBI" id="CHEBI:57856"/>
        <dbReference type="ChEBI" id="CHEBI:59789"/>
        <dbReference type="ChEBI" id="CHEBI:73542"/>
        <dbReference type="ChEBI" id="CHEBI:74269"/>
        <dbReference type="EC" id="2.1.1.221"/>
    </reaction>
</comment>
<comment type="subunit">
    <text evidence="1">Monomer.</text>
</comment>
<comment type="subcellular location">
    <subcellularLocation>
        <location evidence="2">Cytoplasm</location>
    </subcellularLocation>
    <subcellularLocation>
        <location evidence="2">Nucleus</location>
    </subcellularLocation>
</comment>
<comment type="similarity">
    <text evidence="3">Belongs to the class IV-like SAM-binding methyltransferase superfamily. TRM10 family.</text>
</comment>
<evidence type="ECO:0000250" key="1">
    <source>
        <dbReference type="UniProtKB" id="O14214"/>
    </source>
</evidence>
<evidence type="ECO:0000250" key="2">
    <source>
        <dbReference type="UniProtKB" id="Q12400"/>
    </source>
</evidence>
<evidence type="ECO:0000255" key="3">
    <source>
        <dbReference type="PROSITE-ProRule" id="PRU01012"/>
    </source>
</evidence>
<evidence type="ECO:0000256" key="4">
    <source>
        <dbReference type="SAM" id="MobiDB-lite"/>
    </source>
</evidence>
<name>TRM10_KLULA</name>
<feature type="chain" id="PRO_0000060517" description="tRNA (guanine(9)-N1)-methyltransferase">
    <location>
        <begin position="1"/>
        <end position="298"/>
    </location>
</feature>
<feature type="domain" description="SAM-dependent MTase TRM10-type" evidence="3">
    <location>
        <begin position="96"/>
        <end position="285"/>
    </location>
</feature>
<feature type="region of interest" description="Disordered" evidence="4">
    <location>
        <begin position="1"/>
        <end position="44"/>
    </location>
</feature>
<feature type="compositionally biased region" description="Polar residues" evidence="4">
    <location>
        <begin position="1"/>
        <end position="10"/>
    </location>
</feature>
<feature type="active site" description="Proton acceptor" evidence="1">
    <location>
        <position position="216"/>
    </location>
</feature>
<feature type="binding site" evidence="2">
    <location>
        <begin position="192"/>
        <end position="193"/>
    </location>
    <ligand>
        <name>S-adenosyl-L-methionine</name>
        <dbReference type="ChEBI" id="CHEBI:59789"/>
    </ligand>
</feature>
<feature type="binding site" evidence="2">
    <location>
        <position position="212"/>
    </location>
    <ligand>
        <name>S-adenosyl-L-methionine</name>
        <dbReference type="ChEBI" id="CHEBI:59789"/>
    </ligand>
</feature>
<feature type="binding site" evidence="2">
    <location>
        <begin position="216"/>
        <end position="220"/>
    </location>
    <ligand>
        <name>S-adenosyl-L-methionine</name>
        <dbReference type="ChEBI" id="CHEBI:59789"/>
    </ligand>
</feature>
<feature type="binding site" evidence="2">
    <location>
        <position position="224"/>
    </location>
    <ligand>
        <name>S-adenosyl-L-methionine</name>
        <dbReference type="ChEBI" id="CHEBI:59789"/>
    </ligand>
</feature>
<feature type="binding site" evidence="2">
    <location>
        <position position="238"/>
    </location>
    <ligand>
        <name>S-adenosyl-L-methionine</name>
        <dbReference type="ChEBI" id="CHEBI:59789"/>
    </ligand>
</feature>
<feature type="binding site" evidence="2">
    <location>
        <begin position="250"/>
        <end position="252"/>
    </location>
    <ligand>
        <name>S-adenosyl-L-methionine</name>
        <dbReference type="ChEBI" id="CHEBI:59789"/>
    </ligand>
</feature>
<protein>
    <recommendedName>
        <fullName evidence="2">tRNA (guanine(9)-N1)-methyltransferase</fullName>
        <ecNumber evidence="2">2.1.1.221</ecNumber>
    </recommendedName>
    <alternativeName>
        <fullName evidence="2">tRNA methyltransferase 10</fullName>
    </alternativeName>
    <alternativeName>
        <fullName evidence="2">tRNA(m1G9)-methyltransferase</fullName>
        <shortName evidence="2">tRNA(m1G9)MTase</shortName>
    </alternativeName>
</protein>
<accession>Q6CUM6</accession>
<dbReference type="EC" id="2.1.1.221" evidence="2"/>
<dbReference type="EMBL" id="CR382123">
    <property type="protein sequence ID" value="CAH01214.1"/>
    <property type="molecule type" value="Genomic_DNA"/>
</dbReference>
<dbReference type="RefSeq" id="XP_452363.1">
    <property type="nucleotide sequence ID" value="XM_452363.1"/>
</dbReference>
<dbReference type="SMR" id="Q6CUM6"/>
<dbReference type="FunCoup" id="Q6CUM6">
    <property type="interactions" value="815"/>
</dbReference>
<dbReference type="STRING" id="284590.Q6CUM6"/>
<dbReference type="PaxDb" id="284590-Q6CUM6"/>
<dbReference type="KEGG" id="kla:KLLA0_C03740g"/>
<dbReference type="eggNOG" id="KOG2967">
    <property type="taxonomic scope" value="Eukaryota"/>
</dbReference>
<dbReference type="HOGENOM" id="CLU_034384_1_0_1"/>
<dbReference type="InParanoid" id="Q6CUM6"/>
<dbReference type="OMA" id="FKKNDGW"/>
<dbReference type="Proteomes" id="UP000000598">
    <property type="component" value="Chromosome C"/>
</dbReference>
<dbReference type="GO" id="GO:0005737">
    <property type="term" value="C:cytoplasm"/>
    <property type="evidence" value="ECO:0007669"/>
    <property type="project" value="UniProtKB-SubCell"/>
</dbReference>
<dbReference type="GO" id="GO:0005634">
    <property type="term" value="C:nucleus"/>
    <property type="evidence" value="ECO:0007669"/>
    <property type="project" value="UniProtKB-SubCell"/>
</dbReference>
<dbReference type="GO" id="GO:0052905">
    <property type="term" value="F:tRNA (guanosine(9)-N1)-methyltransferase activity"/>
    <property type="evidence" value="ECO:0007669"/>
    <property type="project" value="UniProtKB-EC"/>
</dbReference>
<dbReference type="GO" id="GO:0000049">
    <property type="term" value="F:tRNA binding"/>
    <property type="evidence" value="ECO:0007669"/>
    <property type="project" value="TreeGrafter"/>
</dbReference>
<dbReference type="GO" id="GO:0002939">
    <property type="term" value="P:tRNA N1-guanine methylation"/>
    <property type="evidence" value="ECO:0007669"/>
    <property type="project" value="TreeGrafter"/>
</dbReference>
<dbReference type="CDD" id="cd18089">
    <property type="entry name" value="SPOUT_Trm10-like"/>
    <property type="match status" value="1"/>
</dbReference>
<dbReference type="Gene3D" id="3.40.1280.30">
    <property type="match status" value="1"/>
</dbReference>
<dbReference type="InterPro" id="IPR028564">
    <property type="entry name" value="MT_TRM10-typ"/>
</dbReference>
<dbReference type="InterPro" id="IPR038459">
    <property type="entry name" value="MT_TRM10-typ_sf"/>
</dbReference>
<dbReference type="InterPro" id="IPR016653">
    <property type="entry name" value="TRM10/TRM10A"/>
</dbReference>
<dbReference type="InterPro" id="IPR007356">
    <property type="entry name" value="tRNA_m1G_MeTrfase_euk"/>
</dbReference>
<dbReference type="InterPro" id="IPR016009">
    <property type="entry name" value="tRNA_MeTrfase_TRMD/TRM10"/>
</dbReference>
<dbReference type="PANTHER" id="PTHR13563">
    <property type="entry name" value="TRNA (GUANINE-9-) METHYLTRANSFERASE"/>
    <property type="match status" value="1"/>
</dbReference>
<dbReference type="PANTHER" id="PTHR13563:SF13">
    <property type="entry name" value="TRNA METHYLTRANSFERASE 10 HOMOLOG A"/>
    <property type="match status" value="1"/>
</dbReference>
<dbReference type="Pfam" id="PF01746">
    <property type="entry name" value="tRNA_m1G_MT"/>
    <property type="match status" value="1"/>
</dbReference>
<dbReference type="PIRSF" id="PIRSF016323">
    <property type="entry name" value="tRNA_m1G_mtfrase_met"/>
    <property type="match status" value="1"/>
</dbReference>
<dbReference type="PROSITE" id="PS51675">
    <property type="entry name" value="SAM_MT_TRM10"/>
    <property type="match status" value="1"/>
</dbReference>
<gene>
    <name evidence="2" type="primary">TRM10</name>
    <name type="ordered locus">KLLA0C03740g</name>
</gene>
<organism>
    <name type="scientific">Kluyveromyces lactis (strain ATCC 8585 / CBS 2359 / DSM 70799 / NBRC 1267 / NRRL Y-1140 / WM37)</name>
    <name type="common">Yeast</name>
    <name type="synonym">Candida sphaerica</name>
    <dbReference type="NCBI Taxonomy" id="284590"/>
    <lineage>
        <taxon>Eukaryota</taxon>
        <taxon>Fungi</taxon>
        <taxon>Dikarya</taxon>
        <taxon>Ascomycota</taxon>
        <taxon>Saccharomycotina</taxon>
        <taxon>Saccharomycetes</taxon>
        <taxon>Saccharomycetales</taxon>
        <taxon>Saccharomycetaceae</taxon>
        <taxon>Kluyveromyces</taxon>
    </lineage>
</organism>
<proteinExistence type="inferred from homology"/>
<keyword id="KW-0963">Cytoplasm</keyword>
<keyword id="KW-0489">Methyltransferase</keyword>
<keyword id="KW-0539">Nucleus</keyword>
<keyword id="KW-1185">Reference proteome</keyword>
<keyword id="KW-0949">S-adenosyl-L-methionine</keyword>
<keyword id="KW-0808">Transferase</keyword>
<keyword id="KW-0819">tRNA processing</keyword>
<reference key="1">
    <citation type="journal article" date="2004" name="Nature">
        <title>Genome evolution in yeasts.</title>
        <authorList>
            <person name="Dujon B."/>
            <person name="Sherman D."/>
            <person name="Fischer G."/>
            <person name="Durrens P."/>
            <person name="Casaregola S."/>
            <person name="Lafontaine I."/>
            <person name="de Montigny J."/>
            <person name="Marck C."/>
            <person name="Neuveglise C."/>
            <person name="Talla E."/>
            <person name="Goffard N."/>
            <person name="Frangeul L."/>
            <person name="Aigle M."/>
            <person name="Anthouard V."/>
            <person name="Babour A."/>
            <person name="Barbe V."/>
            <person name="Barnay S."/>
            <person name="Blanchin S."/>
            <person name="Beckerich J.-M."/>
            <person name="Beyne E."/>
            <person name="Bleykasten C."/>
            <person name="Boisrame A."/>
            <person name="Boyer J."/>
            <person name="Cattolico L."/>
            <person name="Confanioleri F."/>
            <person name="de Daruvar A."/>
            <person name="Despons L."/>
            <person name="Fabre E."/>
            <person name="Fairhead C."/>
            <person name="Ferry-Dumazet H."/>
            <person name="Groppi A."/>
            <person name="Hantraye F."/>
            <person name="Hennequin C."/>
            <person name="Jauniaux N."/>
            <person name="Joyet P."/>
            <person name="Kachouri R."/>
            <person name="Kerrest A."/>
            <person name="Koszul R."/>
            <person name="Lemaire M."/>
            <person name="Lesur I."/>
            <person name="Ma L."/>
            <person name="Muller H."/>
            <person name="Nicaud J.-M."/>
            <person name="Nikolski M."/>
            <person name="Oztas S."/>
            <person name="Ozier-Kalogeropoulos O."/>
            <person name="Pellenz S."/>
            <person name="Potier S."/>
            <person name="Richard G.-F."/>
            <person name="Straub M.-L."/>
            <person name="Suleau A."/>
            <person name="Swennen D."/>
            <person name="Tekaia F."/>
            <person name="Wesolowski-Louvel M."/>
            <person name="Westhof E."/>
            <person name="Wirth B."/>
            <person name="Zeniou-Meyer M."/>
            <person name="Zivanovic Y."/>
            <person name="Bolotin-Fukuhara M."/>
            <person name="Thierry A."/>
            <person name="Bouchier C."/>
            <person name="Caudron B."/>
            <person name="Scarpelli C."/>
            <person name="Gaillardin C."/>
            <person name="Weissenbach J."/>
            <person name="Wincker P."/>
            <person name="Souciet J.-L."/>
        </authorList>
    </citation>
    <scope>NUCLEOTIDE SEQUENCE [LARGE SCALE GENOMIC DNA]</scope>
    <source>
        <strain>ATCC 8585 / CBS 2359 / DSM 70799 / NBRC 1267 / NRRL Y-1140 / WM37</strain>
    </source>
</reference>